<feature type="chain" id="PRO_0000371288" description="Reticulon-like protein B7">
    <location>
        <begin position="1"/>
        <end position="244"/>
    </location>
</feature>
<feature type="transmembrane region" description="Helical" evidence="2">
    <location>
        <begin position="80"/>
        <end position="100"/>
    </location>
</feature>
<feature type="transmembrane region" description="Helical" evidence="2">
    <location>
        <begin position="103"/>
        <end position="123"/>
    </location>
</feature>
<feature type="transmembrane region" description="Helical" evidence="2">
    <location>
        <begin position="172"/>
        <end position="192"/>
    </location>
</feature>
<feature type="domain" description="Reticulon" evidence="3">
    <location>
        <begin position="70"/>
        <end position="244"/>
    </location>
</feature>
<protein>
    <recommendedName>
        <fullName>Reticulon-like protein B7</fullName>
        <shortName>AtRTNLB7</shortName>
    </recommendedName>
</protein>
<keyword id="KW-0256">Endoplasmic reticulum</keyword>
<keyword id="KW-0472">Membrane</keyword>
<keyword id="KW-1185">Reference proteome</keyword>
<keyword id="KW-0812">Transmembrane</keyword>
<keyword id="KW-1133">Transmembrane helix</keyword>
<name>RTNLG_ARATH</name>
<reference key="1">
    <citation type="journal article" date="1999" name="Nature">
        <title>Sequence and analysis of chromosome 4 of the plant Arabidopsis thaliana.</title>
        <authorList>
            <person name="Mayer K.F.X."/>
            <person name="Schueller C."/>
            <person name="Wambutt R."/>
            <person name="Murphy G."/>
            <person name="Volckaert G."/>
            <person name="Pohl T."/>
            <person name="Duesterhoeft A."/>
            <person name="Stiekema W."/>
            <person name="Entian K.-D."/>
            <person name="Terryn N."/>
            <person name="Harris B."/>
            <person name="Ansorge W."/>
            <person name="Brandt P."/>
            <person name="Grivell L.A."/>
            <person name="Rieger M."/>
            <person name="Weichselgartner M."/>
            <person name="de Simone V."/>
            <person name="Obermaier B."/>
            <person name="Mache R."/>
            <person name="Mueller M."/>
            <person name="Kreis M."/>
            <person name="Delseny M."/>
            <person name="Puigdomenech P."/>
            <person name="Watson M."/>
            <person name="Schmidtheini T."/>
            <person name="Reichert B."/>
            <person name="Portetelle D."/>
            <person name="Perez-Alonso M."/>
            <person name="Boutry M."/>
            <person name="Bancroft I."/>
            <person name="Vos P."/>
            <person name="Hoheisel J."/>
            <person name="Zimmermann W."/>
            <person name="Wedler H."/>
            <person name="Ridley P."/>
            <person name="Langham S.-A."/>
            <person name="McCullagh B."/>
            <person name="Bilham L."/>
            <person name="Robben J."/>
            <person name="van der Schueren J."/>
            <person name="Grymonprez B."/>
            <person name="Chuang Y.-J."/>
            <person name="Vandenbussche F."/>
            <person name="Braeken M."/>
            <person name="Weltjens I."/>
            <person name="Voet M."/>
            <person name="Bastiaens I."/>
            <person name="Aert R."/>
            <person name="Defoor E."/>
            <person name="Weitzenegger T."/>
            <person name="Bothe G."/>
            <person name="Ramsperger U."/>
            <person name="Hilbert H."/>
            <person name="Braun M."/>
            <person name="Holzer E."/>
            <person name="Brandt A."/>
            <person name="Peters S."/>
            <person name="van Staveren M."/>
            <person name="Dirkse W."/>
            <person name="Mooijman P."/>
            <person name="Klein Lankhorst R."/>
            <person name="Rose M."/>
            <person name="Hauf J."/>
            <person name="Koetter P."/>
            <person name="Berneiser S."/>
            <person name="Hempel S."/>
            <person name="Feldpausch M."/>
            <person name="Lamberth S."/>
            <person name="Van den Daele H."/>
            <person name="De Keyser A."/>
            <person name="Buysshaert C."/>
            <person name="Gielen J."/>
            <person name="Villarroel R."/>
            <person name="De Clercq R."/>
            <person name="van Montagu M."/>
            <person name="Rogers J."/>
            <person name="Cronin A."/>
            <person name="Quail M.A."/>
            <person name="Bray-Allen S."/>
            <person name="Clark L."/>
            <person name="Doggett J."/>
            <person name="Hall S."/>
            <person name="Kay M."/>
            <person name="Lennard N."/>
            <person name="McLay K."/>
            <person name="Mayes R."/>
            <person name="Pettett A."/>
            <person name="Rajandream M.A."/>
            <person name="Lyne M."/>
            <person name="Benes V."/>
            <person name="Rechmann S."/>
            <person name="Borkova D."/>
            <person name="Bloecker H."/>
            <person name="Scharfe M."/>
            <person name="Grimm M."/>
            <person name="Loehnert T.-H."/>
            <person name="Dose S."/>
            <person name="de Haan M."/>
            <person name="Maarse A.C."/>
            <person name="Schaefer M."/>
            <person name="Mueller-Auer S."/>
            <person name="Gabel C."/>
            <person name="Fuchs M."/>
            <person name="Fartmann B."/>
            <person name="Granderath K."/>
            <person name="Dauner D."/>
            <person name="Herzl A."/>
            <person name="Neumann S."/>
            <person name="Argiriou A."/>
            <person name="Vitale D."/>
            <person name="Liguori R."/>
            <person name="Piravandi E."/>
            <person name="Massenet O."/>
            <person name="Quigley F."/>
            <person name="Clabauld G."/>
            <person name="Muendlein A."/>
            <person name="Felber R."/>
            <person name="Schnabl S."/>
            <person name="Hiller R."/>
            <person name="Schmidt W."/>
            <person name="Lecharny A."/>
            <person name="Aubourg S."/>
            <person name="Chefdor F."/>
            <person name="Cooke R."/>
            <person name="Berger C."/>
            <person name="Monfort A."/>
            <person name="Casacuberta E."/>
            <person name="Gibbons T."/>
            <person name="Weber N."/>
            <person name="Vandenbol M."/>
            <person name="Bargues M."/>
            <person name="Terol J."/>
            <person name="Torres A."/>
            <person name="Perez-Perez A."/>
            <person name="Purnelle B."/>
            <person name="Bent E."/>
            <person name="Johnson S."/>
            <person name="Tacon D."/>
            <person name="Jesse T."/>
            <person name="Heijnen L."/>
            <person name="Schwarz S."/>
            <person name="Scholler P."/>
            <person name="Heber S."/>
            <person name="Francs P."/>
            <person name="Bielke C."/>
            <person name="Frishman D."/>
            <person name="Haase D."/>
            <person name="Lemcke K."/>
            <person name="Mewes H.-W."/>
            <person name="Stocker S."/>
            <person name="Zaccaria P."/>
            <person name="Bevan M."/>
            <person name="Wilson R.K."/>
            <person name="de la Bastide M."/>
            <person name="Habermann K."/>
            <person name="Parnell L."/>
            <person name="Dedhia N."/>
            <person name="Gnoj L."/>
            <person name="Schutz K."/>
            <person name="Huang E."/>
            <person name="Spiegel L."/>
            <person name="Sekhon M."/>
            <person name="Murray J."/>
            <person name="Sheet P."/>
            <person name="Cordes M."/>
            <person name="Abu-Threideh J."/>
            <person name="Stoneking T."/>
            <person name="Kalicki J."/>
            <person name="Graves T."/>
            <person name="Harmon G."/>
            <person name="Edwards J."/>
            <person name="Latreille P."/>
            <person name="Courtney L."/>
            <person name="Cloud J."/>
            <person name="Abbott A."/>
            <person name="Scott K."/>
            <person name="Johnson D."/>
            <person name="Minx P."/>
            <person name="Bentley D."/>
            <person name="Fulton B."/>
            <person name="Miller N."/>
            <person name="Greco T."/>
            <person name="Kemp K."/>
            <person name="Kramer J."/>
            <person name="Fulton L."/>
            <person name="Mardis E."/>
            <person name="Dante M."/>
            <person name="Pepin K."/>
            <person name="Hillier L.W."/>
            <person name="Nelson J."/>
            <person name="Spieth J."/>
            <person name="Ryan E."/>
            <person name="Andrews S."/>
            <person name="Geisel C."/>
            <person name="Layman D."/>
            <person name="Du H."/>
            <person name="Ali J."/>
            <person name="Berghoff A."/>
            <person name="Jones K."/>
            <person name="Drone K."/>
            <person name="Cotton M."/>
            <person name="Joshu C."/>
            <person name="Antonoiu B."/>
            <person name="Zidanic M."/>
            <person name="Strong C."/>
            <person name="Sun H."/>
            <person name="Lamar B."/>
            <person name="Yordan C."/>
            <person name="Ma P."/>
            <person name="Zhong J."/>
            <person name="Preston R."/>
            <person name="Vil D."/>
            <person name="Shekher M."/>
            <person name="Matero A."/>
            <person name="Shah R."/>
            <person name="Swaby I.K."/>
            <person name="O'Shaughnessy A."/>
            <person name="Rodriguez M."/>
            <person name="Hoffman J."/>
            <person name="Till S."/>
            <person name="Granat S."/>
            <person name="Shohdy N."/>
            <person name="Hasegawa A."/>
            <person name="Hameed A."/>
            <person name="Lodhi M."/>
            <person name="Johnson A."/>
            <person name="Chen E."/>
            <person name="Marra M.A."/>
            <person name="Martienssen R."/>
            <person name="McCombie W.R."/>
        </authorList>
    </citation>
    <scope>NUCLEOTIDE SEQUENCE [LARGE SCALE GENOMIC DNA]</scope>
    <source>
        <strain>cv. Columbia</strain>
    </source>
</reference>
<reference key="2">
    <citation type="journal article" date="2017" name="Plant J.">
        <title>Araport11: a complete reannotation of the Arabidopsis thaliana reference genome.</title>
        <authorList>
            <person name="Cheng C.Y."/>
            <person name="Krishnakumar V."/>
            <person name="Chan A.P."/>
            <person name="Thibaud-Nissen F."/>
            <person name="Schobel S."/>
            <person name="Town C.D."/>
        </authorList>
    </citation>
    <scope>GENOME REANNOTATION</scope>
    <source>
        <strain>cv. Columbia</strain>
    </source>
</reference>
<reference key="3">
    <citation type="journal article" date="2007" name="FEBS Lett.">
        <title>Reticulon-like proteins in Arabidopsis thaliana: structural organization and ER localization.</title>
        <authorList>
            <person name="Nziengui H."/>
            <person name="Bouhidel K."/>
            <person name="Pillon D."/>
            <person name="Der C."/>
            <person name="Marty F."/>
            <person name="Schoefs B."/>
        </authorList>
    </citation>
    <scope>GENE FAMILY</scope>
    <scope>NOMENCLATURE</scope>
</reference>
<dbReference type="EMBL" id="AF007269">
    <property type="protein sequence ID" value="AAB61018.1"/>
    <property type="status" value="ALT_SEQ"/>
    <property type="molecule type" value="Genomic_DNA"/>
</dbReference>
<dbReference type="EMBL" id="AL161491">
    <property type="protein sequence ID" value="CAB80932.1"/>
    <property type="status" value="ALT_SEQ"/>
    <property type="molecule type" value="Genomic_DNA"/>
</dbReference>
<dbReference type="EMBL" id="CP002687">
    <property type="protein sequence ID" value="AEE81997.1"/>
    <property type="status" value="ALT_SEQ"/>
    <property type="molecule type" value="Genomic_DNA"/>
</dbReference>
<dbReference type="EMBL" id="CP002687">
    <property type="protein sequence ID" value="ANM66960.1"/>
    <property type="molecule type" value="Genomic_DNA"/>
</dbReference>
<dbReference type="PIR" id="B85016">
    <property type="entry name" value="B85016"/>
</dbReference>
<dbReference type="PIR" id="T01721">
    <property type="entry name" value="T01721"/>
</dbReference>
<dbReference type="RefSeq" id="NP_001328823.1">
    <property type="nucleotide sequence ID" value="NM_001340306.1"/>
</dbReference>
<dbReference type="RefSeq" id="NP_192032.1">
    <property type="nucleotide sequence ID" value="NM_116353.2"/>
</dbReference>
<dbReference type="SMR" id="Q9M145"/>
<dbReference type="FunCoup" id="Q9M145">
    <property type="interactions" value="66"/>
</dbReference>
<dbReference type="STRING" id="3702.Q9M145"/>
<dbReference type="PaxDb" id="3702-AT4G01230.1"/>
<dbReference type="ProteomicsDB" id="226637"/>
<dbReference type="EnsemblPlants" id="AT4G01230.2">
    <property type="protein sequence ID" value="AT4G01230.2"/>
    <property type="gene ID" value="AT4G01230"/>
</dbReference>
<dbReference type="GeneID" id="827950"/>
<dbReference type="Gramene" id="AT4G01230.2">
    <property type="protein sequence ID" value="AT4G01230.2"/>
    <property type="gene ID" value="AT4G01230"/>
</dbReference>
<dbReference type="KEGG" id="ath:AT4G01230"/>
<dbReference type="Araport" id="AT4G01230"/>
<dbReference type="TAIR" id="AT4G01230">
    <property type="gene designation" value="RTNLB7"/>
</dbReference>
<dbReference type="eggNOG" id="KOG1792">
    <property type="taxonomic scope" value="Eukaryota"/>
</dbReference>
<dbReference type="HOGENOM" id="CLU_066344_1_0_1"/>
<dbReference type="InParanoid" id="Q9M145"/>
<dbReference type="PhylomeDB" id="Q9M145"/>
<dbReference type="PRO" id="PR:Q9M145"/>
<dbReference type="Proteomes" id="UP000006548">
    <property type="component" value="Chromosome 4"/>
</dbReference>
<dbReference type="ExpressionAtlas" id="Q9M145">
    <property type="expression patterns" value="baseline and differential"/>
</dbReference>
<dbReference type="GO" id="GO:0005789">
    <property type="term" value="C:endoplasmic reticulum membrane"/>
    <property type="evidence" value="ECO:0007669"/>
    <property type="project" value="UniProtKB-SubCell"/>
</dbReference>
<dbReference type="GO" id="GO:0009617">
    <property type="term" value="P:response to bacterium"/>
    <property type="evidence" value="ECO:0007669"/>
    <property type="project" value="InterPro"/>
</dbReference>
<dbReference type="InterPro" id="IPR003388">
    <property type="entry name" value="Reticulon"/>
</dbReference>
<dbReference type="InterPro" id="IPR045064">
    <property type="entry name" value="Reticulon-like"/>
</dbReference>
<dbReference type="PANTHER" id="PTHR10994">
    <property type="entry name" value="RETICULON"/>
    <property type="match status" value="1"/>
</dbReference>
<dbReference type="PANTHER" id="PTHR10994:SF181">
    <property type="entry name" value="RETICULON-LIKE PROTEIN B7"/>
    <property type="match status" value="1"/>
</dbReference>
<dbReference type="Pfam" id="PF02453">
    <property type="entry name" value="Reticulon"/>
    <property type="match status" value="1"/>
</dbReference>
<dbReference type="PROSITE" id="PS50845">
    <property type="entry name" value="RETICULON"/>
    <property type="match status" value="1"/>
</dbReference>
<organism>
    <name type="scientific">Arabidopsis thaliana</name>
    <name type="common">Mouse-ear cress</name>
    <dbReference type="NCBI Taxonomy" id="3702"/>
    <lineage>
        <taxon>Eukaryota</taxon>
        <taxon>Viridiplantae</taxon>
        <taxon>Streptophyta</taxon>
        <taxon>Embryophyta</taxon>
        <taxon>Tracheophyta</taxon>
        <taxon>Spermatophyta</taxon>
        <taxon>Magnoliopsida</taxon>
        <taxon>eudicotyledons</taxon>
        <taxon>Gunneridae</taxon>
        <taxon>Pentapetalae</taxon>
        <taxon>rosids</taxon>
        <taxon>malvids</taxon>
        <taxon>Brassicales</taxon>
        <taxon>Brassicaceae</taxon>
        <taxon>Camelineae</taxon>
        <taxon>Arabidopsis</taxon>
    </lineage>
</organism>
<sequence length="244" mass="27563">MEEEKLEIVGPLEEPLMGNIVPEEINGLDSLTSSDSDSEKPDSPVPINAPIYRMFGRERPIHMVLGGGKPADVLLWRDKKVTLGLLSAVTVIWLLFGFGGRRLLTSLCRGSILFLLLSFLWSNALNKSPENMMDIYIPEKPLLQAASAMTFELNCAFATLRSIALERDIKNFVMAVIGLWLVSVIGNWFSFLSLLYICFVLIHTVPMLYEKYEDEIDPIAEKAVIEMKKHYQVFEAKFLSKIPH</sequence>
<proteinExistence type="inferred from homology"/>
<gene>
    <name type="primary">RTNLB7</name>
    <name type="ordered locus">At4g01230</name>
    <name type="ORF">F2N1.8</name>
</gene>
<accession>Q9M145</accession>
<accession>F4JHZ7</accession>
<accession>O04611</accession>
<evidence type="ECO:0000250" key="1">
    <source>
        <dbReference type="UniProtKB" id="Q9SH59"/>
    </source>
</evidence>
<evidence type="ECO:0000255" key="2"/>
<evidence type="ECO:0000255" key="3">
    <source>
        <dbReference type="PROSITE-ProRule" id="PRU00170"/>
    </source>
</evidence>
<evidence type="ECO:0000305" key="4"/>
<comment type="subcellular location">
    <subcellularLocation>
        <location evidence="1">Endoplasmic reticulum membrane</location>
        <topology evidence="2">Multi-pass membrane protein</topology>
    </subcellularLocation>
</comment>
<comment type="sequence caution" evidence="4">
    <conflict type="erroneous gene model prediction">
        <sequence resource="EMBL-CDS" id="AAB61018"/>
    </conflict>
</comment>
<comment type="sequence caution" evidence="4">
    <conflict type="erroneous gene model prediction">
        <sequence resource="EMBL-CDS" id="AEE81997"/>
    </conflict>
</comment>
<comment type="sequence caution" evidence="4">
    <conflict type="erroneous gene model prediction">
        <sequence resource="EMBL-CDS" id="CAB80932"/>
    </conflict>
</comment>